<organism>
    <name type="scientific">Xenopus laevis</name>
    <name type="common">African clawed frog</name>
    <dbReference type="NCBI Taxonomy" id="8355"/>
    <lineage>
        <taxon>Eukaryota</taxon>
        <taxon>Metazoa</taxon>
        <taxon>Chordata</taxon>
        <taxon>Craniata</taxon>
        <taxon>Vertebrata</taxon>
        <taxon>Euteleostomi</taxon>
        <taxon>Amphibia</taxon>
        <taxon>Batrachia</taxon>
        <taxon>Anura</taxon>
        <taxon>Pipoidea</taxon>
        <taxon>Pipidae</taxon>
        <taxon>Xenopodinae</taxon>
        <taxon>Xenopus</taxon>
        <taxon>Xenopus</taxon>
    </lineage>
</organism>
<comment type="function">
    <text evidence="1">Essential for mitochondrial network organization, mitochondrial metabolism and cell growth at organism and cellular level. May play an important role in mitochondrial protein synthesis. May also participate in mitochondrial DNA replication. May bind to mitochondrial DNA D-loops and contribute to nucleoid stability. Required for enhanced channeling of cholesterol for hormone-dependent steroidogenesis. Involved in mitochondrial-mediated antiviral innate immunity. Required to protect mitochondria from the PERK-mediated unfolded protein response: specifically inhibits the activity of EIF2AK3/PERK at mitochondria-endoplasmic reticulum contact sites, thereby providing a safe haven for mitochondrial protein translation during endoplasmic reticulum stress. Ability to inhibit EIF2AK3/PERK is independent of its ATPase activity. Also involved in the mitochondrial DNA damage response by promoting signaling between damaged genomes and the mitochondrial membrane, leading to activation of the integrated stress response (ISR).</text>
</comment>
<comment type="catalytic activity">
    <reaction evidence="1">
        <text>ATP + H2O = ADP + phosphate + H(+)</text>
        <dbReference type="Rhea" id="RHEA:13065"/>
        <dbReference type="ChEBI" id="CHEBI:15377"/>
        <dbReference type="ChEBI" id="CHEBI:15378"/>
        <dbReference type="ChEBI" id="CHEBI:30616"/>
        <dbReference type="ChEBI" id="CHEBI:43474"/>
        <dbReference type="ChEBI" id="CHEBI:456216"/>
    </reaction>
    <physiologicalReaction direction="left-to-right" evidence="1">
        <dbReference type="Rhea" id="RHEA:13066"/>
    </physiologicalReaction>
</comment>
<comment type="subunit">
    <text evidence="1">Can form homooligomers. Homodimer formation at the N-terminus may be regulated by ATP and is required for the interaction with the inner surface of the mitochondrial outer membrane and correct mitochondrial homeostasis.</text>
</comment>
<comment type="subcellular location">
    <subcellularLocation>
        <location evidence="1">Mitochondrion inner membrane</location>
        <topology evidence="1">Single-pass membrane protein</topology>
    </subcellularLocation>
    <subcellularLocation>
        <location evidence="1">Mitochondrion matrix</location>
        <location evidence="1">Mitochondrion nucleoid</location>
    </subcellularLocation>
    <text evidence="1">In the mitochondrial inner membrane, enriched in sites with the potential to form contacts with the outer membrane. The N-terminal domain interacts with the inner surface of the mitochondrial outer membrane and the C-terminal domain localizes in a specific matrix compartment, where it is associated with nucleoids. Also present at mitochondria-endoplasmic reticulum contact sites.</text>
</comment>
<comment type="domain">
    <text evidence="1">The transmembrane domain and a C-terminal adjacent region contain all information necessary for mitochondrial targeting.</text>
</comment>
<comment type="similarity">
    <text evidence="4">Belongs to the AAA ATPase family.</text>
</comment>
<evidence type="ECO:0000250" key="1">
    <source>
        <dbReference type="UniProtKB" id="Q9NVI7"/>
    </source>
</evidence>
<evidence type="ECO:0000255" key="2"/>
<evidence type="ECO:0000256" key="3">
    <source>
        <dbReference type="SAM" id="MobiDB-lite"/>
    </source>
</evidence>
<evidence type="ECO:0000305" key="4"/>
<name>ATD3A_XENLA</name>
<reference key="1">
    <citation type="submission" date="2005-03" db="EMBL/GenBank/DDBJ databases">
        <authorList>
            <consortium name="NIH - Xenopus Gene Collection (XGC) project"/>
        </authorList>
    </citation>
    <scope>NUCLEOTIDE SEQUENCE [LARGE SCALE MRNA]</scope>
    <source>
        <tissue>Egg</tissue>
    </source>
</reference>
<proteinExistence type="evidence at transcript level"/>
<accession>Q58E76</accession>
<keyword id="KW-0067">ATP-binding</keyword>
<keyword id="KW-0175">Coiled coil</keyword>
<keyword id="KW-0378">Hydrolase</keyword>
<keyword id="KW-0472">Membrane</keyword>
<keyword id="KW-0496">Mitochondrion</keyword>
<keyword id="KW-0999">Mitochondrion inner membrane</keyword>
<keyword id="KW-1135">Mitochondrion nucleoid</keyword>
<keyword id="KW-0547">Nucleotide-binding</keyword>
<keyword id="KW-1185">Reference proteome</keyword>
<keyword id="KW-0812">Transmembrane</keyword>
<keyword id="KW-1133">Transmembrane helix</keyword>
<protein>
    <recommendedName>
        <fullName>ATPase family AAA domain-containing protein 3-A</fullName>
        <ecNumber evidence="1">3.6.1.-</ecNumber>
    </recommendedName>
</protein>
<dbReference type="EC" id="3.6.1.-" evidence="1"/>
<dbReference type="EMBL" id="BC092039">
    <property type="protein sequence ID" value="AAH92039.1"/>
    <property type="molecule type" value="mRNA"/>
</dbReference>
<dbReference type="RefSeq" id="NP_001089330.1">
    <property type="nucleotide sequence ID" value="NM_001095861.1"/>
</dbReference>
<dbReference type="SMR" id="Q58E76"/>
<dbReference type="BioGRID" id="592161">
    <property type="interactions" value="1"/>
</dbReference>
<dbReference type="GeneID" id="734380"/>
<dbReference type="KEGG" id="xla:734380"/>
<dbReference type="AGR" id="Xenbase:XB-GENE-6251449"/>
<dbReference type="CTD" id="734380"/>
<dbReference type="Xenbase" id="XB-GENE-6251449">
    <property type="gene designation" value="atad3a.S"/>
</dbReference>
<dbReference type="OrthoDB" id="199596at2759"/>
<dbReference type="Proteomes" id="UP000186698">
    <property type="component" value="Chromosome 7S"/>
</dbReference>
<dbReference type="Bgee" id="734380">
    <property type="expression patterns" value="Expressed in oocyte and 19 other cell types or tissues"/>
</dbReference>
<dbReference type="GO" id="GO:0005743">
    <property type="term" value="C:mitochondrial inner membrane"/>
    <property type="evidence" value="ECO:0007669"/>
    <property type="project" value="UniProtKB-SubCell"/>
</dbReference>
<dbReference type="GO" id="GO:0042645">
    <property type="term" value="C:mitochondrial nucleoid"/>
    <property type="evidence" value="ECO:0007669"/>
    <property type="project" value="UniProtKB-SubCell"/>
</dbReference>
<dbReference type="GO" id="GO:0005739">
    <property type="term" value="C:mitochondrion"/>
    <property type="evidence" value="ECO:0000318"/>
    <property type="project" value="GO_Central"/>
</dbReference>
<dbReference type="GO" id="GO:0005524">
    <property type="term" value="F:ATP binding"/>
    <property type="evidence" value="ECO:0007669"/>
    <property type="project" value="UniProtKB-KW"/>
</dbReference>
<dbReference type="GO" id="GO:0016887">
    <property type="term" value="F:ATP hydrolysis activity"/>
    <property type="evidence" value="ECO:0000250"/>
    <property type="project" value="UniProtKB"/>
</dbReference>
<dbReference type="GO" id="GO:0030291">
    <property type="term" value="F:protein serine/threonine kinase inhibitor activity"/>
    <property type="evidence" value="ECO:0000250"/>
    <property type="project" value="UniProtKB"/>
</dbReference>
<dbReference type="GO" id="GO:0008270">
    <property type="term" value="F:zinc ion binding"/>
    <property type="evidence" value="ECO:0007669"/>
    <property type="project" value="TreeGrafter"/>
</dbReference>
<dbReference type="GO" id="GO:0007005">
    <property type="term" value="P:mitochondrion organization"/>
    <property type="evidence" value="ECO:0000318"/>
    <property type="project" value="GO_Central"/>
</dbReference>
<dbReference type="GO" id="GO:1903898">
    <property type="term" value="P:negative regulation of PERK-mediated unfolded protein response"/>
    <property type="evidence" value="ECO:0000250"/>
    <property type="project" value="UniProtKB"/>
</dbReference>
<dbReference type="CDD" id="cd19512">
    <property type="entry name" value="RecA-like_ATAD3-like"/>
    <property type="match status" value="1"/>
</dbReference>
<dbReference type="FunFam" id="3.40.50.300:FF:000470">
    <property type="entry name" value="ATPase family, AAA domain containing 3A"/>
    <property type="match status" value="1"/>
</dbReference>
<dbReference type="Gene3D" id="3.40.50.300">
    <property type="entry name" value="P-loop containing nucleotide triphosphate hydrolases"/>
    <property type="match status" value="1"/>
</dbReference>
<dbReference type="InterPro" id="IPR003593">
    <property type="entry name" value="AAA+_ATPase"/>
</dbReference>
<dbReference type="InterPro" id="IPR021911">
    <property type="entry name" value="ATAD3_N"/>
</dbReference>
<dbReference type="InterPro" id="IPR003959">
    <property type="entry name" value="ATPase_AAA_core"/>
</dbReference>
<dbReference type="InterPro" id="IPR027417">
    <property type="entry name" value="P-loop_NTPase"/>
</dbReference>
<dbReference type="PANTHER" id="PTHR23075:SF0">
    <property type="entry name" value="ATPASE FAMILY AAA DOMAIN-CONTAINING PROTEIN 3"/>
    <property type="match status" value="1"/>
</dbReference>
<dbReference type="PANTHER" id="PTHR23075">
    <property type="entry name" value="PUTATIVE ATP-ASE"/>
    <property type="match status" value="1"/>
</dbReference>
<dbReference type="Pfam" id="PF00004">
    <property type="entry name" value="AAA"/>
    <property type="match status" value="1"/>
</dbReference>
<dbReference type="Pfam" id="PF12037">
    <property type="entry name" value="ATAD3_N"/>
    <property type="match status" value="1"/>
</dbReference>
<dbReference type="SMART" id="SM00382">
    <property type="entry name" value="AAA"/>
    <property type="match status" value="1"/>
</dbReference>
<dbReference type="SUPFAM" id="SSF52540">
    <property type="entry name" value="P-loop containing nucleoside triphosphate hydrolases"/>
    <property type="match status" value="1"/>
</dbReference>
<feature type="chain" id="PRO_0000311982" description="ATPase family AAA domain-containing protein 3-A">
    <location>
        <begin position="1"/>
        <end position="593"/>
    </location>
</feature>
<feature type="topological domain" description="Mitochondrial intermembrane" evidence="2">
    <location>
        <begin position="1"/>
        <end position="242"/>
    </location>
</feature>
<feature type="transmembrane region" description="Helical" evidence="2">
    <location>
        <begin position="243"/>
        <end position="260"/>
    </location>
</feature>
<feature type="topological domain" description="Mitochondrial matrix" evidence="2">
    <location>
        <begin position="261"/>
        <end position="593"/>
    </location>
</feature>
<feature type="region of interest" description="Disordered" evidence="3">
    <location>
        <begin position="1"/>
        <end position="64"/>
    </location>
</feature>
<feature type="coiled-coil region" evidence="2">
    <location>
        <begin position="52"/>
        <end position="215"/>
    </location>
</feature>
<feature type="compositionally biased region" description="Pro residues" evidence="3">
    <location>
        <begin position="15"/>
        <end position="27"/>
    </location>
</feature>
<feature type="compositionally biased region" description="Basic and acidic residues" evidence="3">
    <location>
        <begin position="33"/>
        <end position="44"/>
    </location>
</feature>
<feature type="compositionally biased region" description="Basic and acidic residues" evidence="3">
    <location>
        <begin position="53"/>
        <end position="64"/>
    </location>
</feature>
<feature type="binding site" evidence="2">
    <location>
        <begin position="348"/>
        <end position="355"/>
    </location>
    <ligand>
        <name>ATP</name>
        <dbReference type="ChEBI" id="CHEBI:30616"/>
    </ligand>
</feature>
<gene>
    <name type="primary">atad3-a</name>
</gene>
<sequence>MSWLFGLNKGQQEPPGVPGFPEPPSPPGGSGDGGDKNKPKDKWSNFDPTGLERAAKAARELDQSRHAKEAINLAKVQEETLQMEQQAKIKEYEAAVEQLKNEQIRVQAEERRKTLNEETKQHQARAQYQDKLARQRYEDQLRQQQLQNEENLRRQEDSVQKQEAMRRATVEHEMELRHKNEMLRIEAEARAQAKVERENADIIREQIRLKAAEHRQTVLESIKTAGTVFGEGFRTFISDWDKVTATVAGLTLLAVGVYTAKNATGVAGRYIEARLGKPSLVRDTSRITVAEAVKHPIKITKRLYSKIQDALEGVILSPRLEERVRDIAIATRNTKANKGLYRNILMYGPPGTGKTLFAKKLAMHSGMDYAIMTGGDVAPMGREGVTAMHKVFDWAGTSKRGLLLFVDEADAFLRKRSTEKISEDLRATLNAFLYRTGEQSNKFMLVLASNQPEQFDWAINDRIDEIVHFDLPGLEERERLVRLYFDKYVLQPASEGKQRLKVAQFDYGKKCSELSKLTEGMSGREISKLGVAWQAAAYASEDGILTEAMIDARVADAIRQHQQKMAWLKAEGKEGAKEIGKNPLQPLLEGTQV</sequence>